<organism>
    <name type="scientific">Burkholderia ambifaria (strain ATCC BAA-244 / DSM 16087 / CCUG 44356 / LMG 19182 / AMMD)</name>
    <name type="common">Burkholderia cepacia (strain AMMD)</name>
    <dbReference type="NCBI Taxonomy" id="339670"/>
    <lineage>
        <taxon>Bacteria</taxon>
        <taxon>Pseudomonadati</taxon>
        <taxon>Pseudomonadota</taxon>
        <taxon>Betaproteobacteria</taxon>
        <taxon>Burkholderiales</taxon>
        <taxon>Burkholderiaceae</taxon>
        <taxon>Burkholderia</taxon>
        <taxon>Burkholderia cepacia complex</taxon>
    </lineage>
</organism>
<feature type="chain" id="PRO_0000351824" description="Protein-L-isoaspartate O-methyltransferase">
    <location>
        <begin position="1"/>
        <end position="310"/>
    </location>
</feature>
<feature type="region of interest" description="Disordered" evidence="2">
    <location>
        <begin position="1"/>
        <end position="46"/>
    </location>
</feature>
<feature type="region of interest" description="Disordered" evidence="2">
    <location>
        <begin position="60"/>
        <end position="79"/>
    </location>
</feature>
<feature type="compositionally biased region" description="Basic and acidic residues" evidence="2">
    <location>
        <begin position="14"/>
        <end position="34"/>
    </location>
</feature>
<feature type="compositionally biased region" description="Low complexity" evidence="2">
    <location>
        <begin position="35"/>
        <end position="46"/>
    </location>
</feature>
<feature type="active site" evidence="1">
    <location>
        <position position="157"/>
    </location>
</feature>
<comment type="function">
    <text evidence="1">Catalyzes the methyl esterification of L-isoaspartyl residues in peptides and proteins that result from spontaneous decomposition of normal L-aspartyl and L-asparaginyl residues. It plays a role in the repair and/or degradation of damaged proteins.</text>
</comment>
<comment type="catalytic activity">
    <reaction evidence="1">
        <text>[protein]-L-isoaspartate + S-adenosyl-L-methionine = [protein]-L-isoaspartate alpha-methyl ester + S-adenosyl-L-homocysteine</text>
        <dbReference type="Rhea" id="RHEA:12705"/>
        <dbReference type="Rhea" id="RHEA-COMP:12143"/>
        <dbReference type="Rhea" id="RHEA-COMP:12144"/>
        <dbReference type="ChEBI" id="CHEBI:57856"/>
        <dbReference type="ChEBI" id="CHEBI:59789"/>
        <dbReference type="ChEBI" id="CHEBI:90596"/>
        <dbReference type="ChEBI" id="CHEBI:90598"/>
        <dbReference type="EC" id="2.1.1.77"/>
    </reaction>
</comment>
<comment type="subcellular location">
    <subcellularLocation>
        <location evidence="1">Cytoplasm</location>
    </subcellularLocation>
</comment>
<comment type="similarity">
    <text evidence="1">Belongs to the methyltransferase superfamily. L-isoaspartyl/D-aspartyl protein methyltransferase family.</text>
</comment>
<proteinExistence type="inferred from homology"/>
<name>PIMT_BURCM</name>
<keyword id="KW-0963">Cytoplasm</keyword>
<keyword id="KW-0489">Methyltransferase</keyword>
<keyword id="KW-0949">S-adenosyl-L-methionine</keyword>
<keyword id="KW-0808">Transferase</keyword>
<sequence length="310" mass="32930">MSGERAKRFPLALEDLKRAPRKSEVRSGSGERHAASAVPKAADKPAAVLKPVAKTGAARALPGTAAAKPATAPKPTVLKPAMPKPAAPTIAPAGAFALTSERVRERMVERLRANGVTDARVLDAMAAVPRHMFVDPGLATQAYEDAALPIGHQQTISKPSVVARMIELAMAGRTLERVLEIGTGCGYQAAVLSHVARDVYSIERIKPLYERAKLNLRPLRVPNIRLHYGDGRVGLPSAAPFDAIVIAAAGLDVPQALLEQLAIGGRLVAPVGAQSGQHQVLTLVERVAPAQWRESRLDRVFFVPLKSGVI</sequence>
<evidence type="ECO:0000255" key="1">
    <source>
        <dbReference type="HAMAP-Rule" id="MF_00090"/>
    </source>
</evidence>
<evidence type="ECO:0000256" key="2">
    <source>
        <dbReference type="SAM" id="MobiDB-lite"/>
    </source>
</evidence>
<dbReference type="EC" id="2.1.1.77" evidence="1"/>
<dbReference type="EMBL" id="CP000440">
    <property type="protein sequence ID" value="ABI87316.1"/>
    <property type="molecule type" value="Genomic_DNA"/>
</dbReference>
<dbReference type="RefSeq" id="WP_011657029.1">
    <property type="nucleotide sequence ID" value="NZ_CP009798.1"/>
</dbReference>
<dbReference type="SMR" id="Q0BEV7"/>
<dbReference type="KEGG" id="bam:Bamb_1760"/>
<dbReference type="PATRIC" id="fig|339670.21.peg.3199"/>
<dbReference type="eggNOG" id="COG2518">
    <property type="taxonomic scope" value="Bacteria"/>
</dbReference>
<dbReference type="Proteomes" id="UP000000662">
    <property type="component" value="Chromosome 1"/>
</dbReference>
<dbReference type="GO" id="GO:0005737">
    <property type="term" value="C:cytoplasm"/>
    <property type="evidence" value="ECO:0007669"/>
    <property type="project" value="UniProtKB-SubCell"/>
</dbReference>
<dbReference type="GO" id="GO:0004719">
    <property type="term" value="F:protein-L-isoaspartate (D-aspartate) O-methyltransferase activity"/>
    <property type="evidence" value="ECO:0007669"/>
    <property type="project" value="UniProtKB-UniRule"/>
</dbReference>
<dbReference type="GO" id="GO:0032259">
    <property type="term" value="P:methylation"/>
    <property type="evidence" value="ECO:0007669"/>
    <property type="project" value="UniProtKB-KW"/>
</dbReference>
<dbReference type="GO" id="GO:0036211">
    <property type="term" value="P:protein modification process"/>
    <property type="evidence" value="ECO:0007669"/>
    <property type="project" value="UniProtKB-UniRule"/>
</dbReference>
<dbReference type="GO" id="GO:0030091">
    <property type="term" value="P:protein repair"/>
    <property type="evidence" value="ECO:0007669"/>
    <property type="project" value="UniProtKB-UniRule"/>
</dbReference>
<dbReference type="CDD" id="cd02440">
    <property type="entry name" value="AdoMet_MTases"/>
    <property type="match status" value="1"/>
</dbReference>
<dbReference type="FunFam" id="3.40.50.150:FF:000010">
    <property type="entry name" value="Protein-L-isoaspartate O-methyltransferase"/>
    <property type="match status" value="1"/>
</dbReference>
<dbReference type="Gene3D" id="3.40.50.150">
    <property type="entry name" value="Vaccinia Virus protein VP39"/>
    <property type="match status" value="1"/>
</dbReference>
<dbReference type="HAMAP" id="MF_00090">
    <property type="entry name" value="PIMT"/>
    <property type="match status" value="1"/>
</dbReference>
<dbReference type="InterPro" id="IPR000682">
    <property type="entry name" value="PCMT"/>
</dbReference>
<dbReference type="InterPro" id="IPR029063">
    <property type="entry name" value="SAM-dependent_MTases_sf"/>
</dbReference>
<dbReference type="NCBIfam" id="TIGR00080">
    <property type="entry name" value="pimt"/>
    <property type="match status" value="1"/>
</dbReference>
<dbReference type="NCBIfam" id="NF001453">
    <property type="entry name" value="PRK00312.1"/>
    <property type="match status" value="1"/>
</dbReference>
<dbReference type="PANTHER" id="PTHR11579">
    <property type="entry name" value="PROTEIN-L-ISOASPARTATE O-METHYLTRANSFERASE"/>
    <property type="match status" value="1"/>
</dbReference>
<dbReference type="PANTHER" id="PTHR11579:SF0">
    <property type="entry name" value="PROTEIN-L-ISOASPARTATE(D-ASPARTATE) O-METHYLTRANSFERASE"/>
    <property type="match status" value="1"/>
</dbReference>
<dbReference type="Pfam" id="PF01135">
    <property type="entry name" value="PCMT"/>
    <property type="match status" value="1"/>
</dbReference>
<dbReference type="SUPFAM" id="SSF53335">
    <property type="entry name" value="S-adenosyl-L-methionine-dependent methyltransferases"/>
    <property type="match status" value="1"/>
</dbReference>
<dbReference type="PROSITE" id="PS01279">
    <property type="entry name" value="PCMT"/>
    <property type="match status" value="1"/>
</dbReference>
<reference key="1">
    <citation type="submission" date="2006-08" db="EMBL/GenBank/DDBJ databases">
        <title>Complete sequence of chromosome 1 of Burkholderia cepacia AMMD.</title>
        <authorList>
            <person name="Copeland A."/>
            <person name="Lucas S."/>
            <person name="Lapidus A."/>
            <person name="Barry K."/>
            <person name="Detter J.C."/>
            <person name="Glavina del Rio T."/>
            <person name="Hammon N."/>
            <person name="Israni S."/>
            <person name="Pitluck S."/>
            <person name="Bruce D."/>
            <person name="Chain P."/>
            <person name="Malfatti S."/>
            <person name="Shin M."/>
            <person name="Vergez L."/>
            <person name="Schmutz J."/>
            <person name="Larimer F."/>
            <person name="Land M."/>
            <person name="Hauser L."/>
            <person name="Kyrpides N."/>
            <person name="Kim E."/>
            <person name="Parke J."/>
            <person name="Coenye T."/>
            <person name="Konstantinidis K."/>
            <person name="Ramette A."/>
            <person name="Tiedje J."/>
            <person name="Richardson P."/>
        </authorList>
    </citation>
    <scope>NUCLEOTIDE SEQUENCE [LARGE SCALE GENOMIC DNA]</scope>
    <source>
        <strain>ATCC BAA-244 / DSM 16087 / CCUG 44356 / LMG 19182 / AMMD</strain>
    </source>
</reference>
<accession>Q0BEV7</accession>
<gene>
    <name evidence="1" type="primary">pcm</name>
    <name type="ordered locus">Bamb_1760</name>
</gene>
<protein>
    <recommendedName>
        <fullName evidence="1">Protein-L-isoaspartate O-methyltransferase</fullName>
        <ecNumber evidence="1">2.1.1.77</ecNumber>
    </recommendedName>
    <alternativeName>
        <fullName evidence="1">L-isoaspartyl protein carboxyl methyltransferase</fullName>
    </alternativeName>
    <alternativeName>
        <fullName evidence="1">Protein L-isoaspartyl methyltransferase</fullName>
    </alternativeName>
    <alternativeName>
        <fullName evidence="1">Protein-beta-aspartate methyltransferase</fullName>
        <shortName evidence="1">PIMT</shortName>
    </alternativeName>
</protein>